<proteinExistence type="inferred from homology"/>
<organism>
    <name type="scientific">Shigella sonnei (strain Ss046)</name>
    <dbReference type="NCBI Taxonomy" id="300269"/>
    <lineage>
        <taxon>Bacteria</taxon>
        <taxon>Pseudomonadati</taxon>
        <taxon>Pseudomonadota</taxon>
        <taxon>Gammaproteobacteria</taxon>
        <taxon>Enterobacterales</taxon>
        <taxon>Enterobacteriaceae</taxon>
        <taxon>Shigella</taxon>
    </lineage>
</organism>
<keyword id="KW-0028">Amino-acid biosynthesis</keyword>
<keyword id="KW-0368">Histidine biosynthesis</keyword>
<keyword id="KW-0479">Metal-binding</keyword>
<keyword id="KW-0520">NAD</keyword>
<keyword id="KW-0560">Oxidoreductase</keyword>
<keyword id="KW-1185">Reference proteome</keyword>
<keyword id="KW-0862">Zinc</keyword>
<reference key="1">
    <citation type="journal article" date="2005" name="Nucleic Acids Res.">
        <title>Genome dynamics and diversity of Shigella species, the etiologic agents of bacillary dysentery.</title>
        <authorList>
            <person name="Yang F."/>
            <person name="Yang J."/>
            <person name="Zhang X."/>
            <person name="Chen L."/>
            <person name="Jiang Y."/>
            <person name="Yan Y."/>
            <person name="Tang X."/>
            <person name="Wang J."/>
            <person name="Xiong Z."/>
            <person name="Dong J."/>
            <person name="Xue Y."/>
            <person name="Zhu Y."/>
            <person name="Xu X."/>
            <person name="Sun L."/>
            <person name="Chen S."/>
            <person name="Nie H."/>
            <person name="Peng J."/>
            <person name="Xu J."/>
            <person name="Wang Y."/>
            <person name="Yuan Z."/>
            <person name="Wen Y."/>
            <person name="Yao Z."/>
            <person name="Shen Y."/>
            <person name="Qiang B."/>
            <person name="Hou Y."/>
            <person name="Yu J."/>
            <person name="Jin Q."/>
        </authorList>
    </citation>
    <scope>NUCLEOTIDE SEQUENCE [LARGE SCALE GENOMIC DNA]</scope>
    <source>
        <strain>Ss046</strain>
    </source>
</reference>
<comment type="function">
    <text evidence="1">Catalyzes the sequential NAD-dependent oxidations of L-histidinol to L-histidinaldehyde and then to L-histidine.</text>
</comment>
<comment type="catalytic activity">
    <reaction evidence="1">
        <text>L-histidinol + 2 NAD(+) + H2O = L-histidine + 2 NADH + 3 H(+)</text>
        <dbReference type="Rhea" id="RHEA:20641"/>
        <dbReference type="ChEBI" id="CHEBI:15377"/>
        <dbReference type="ChEBI" id="CHEBI:15378"/>
        <dbReference type="ChEBI" id="CHEBI:57540"/>
        <dbReference type="ChEBI" id="CHEBI:57595"/>
        <dbReference type="ChEBI" id="CHEBI:57699"/>
        <dbReference type="ChEBI" id="CHEBI:57945"/>
        <dbReference type="EC" id="1.1.1.23"/>
    </reaction>
</comment>
<comment type="cofactor">
    <cofactor evidence="1">
        <name>Zn(2+)</name>
        <dbReference type="ChEBI" id="CHEBI:29105"/>
    </cofactor>
    <text evidence="1">Binds 1 zinc ion per subunit.</text>
</comment>
<comment type="pathway">
    <text evidence="1">Amino-acid biosynthesis; L-histidine biosynthesis; L-histidine from 5-phospho-alpha-D-ribose 1-diphosphate: step 9/9.</text>
</comment>
<comment type="subunit">
    <text evidence="1">Homodimer.</text>
</comment>
<comment type="similarity">
    <text evidence="1">Belongs to the histidinol dehydrogenase family.</text>
</comment>
<dbReference type="EC" id="1.1.1.23" evidence="1"/>
<dbReference type="EMBL" id="CP000038">
    <property type="protein sequence ID" value="AAZ88747.1"/>
    <property type="molecule type" value="Genomic_DNA"/>
</dbReference>
<dbReference type="RefSeq" id="WP_001462576.1">
    <property type="nucleotide sequence ID" value="NC_007384.1"/>
</dbReference>
<dbReference type="SMR" id="Q3Z0G5"/>
<dbReference type="GeneID" id="93775153"/>
<dbReference type="KEGG" id="ssn:SSON_2091"/>
<dbReference type="HOGENOM" id="CLU_006732_3_0_6"/>
<dbReference type="UniPathway" id="UPA00031">
    <property type="reaction ID" value="UER00014"/>
</dbReference>
<dbReference type="Proteomes" id="UP000002529">
    <property type="component" value="Chromosome"/>
</dbReference>
<dbReference type="GO" id="GO:0005829">
    <property type="term" value="C:cytosol"/>
    <property type="evidence" value="ECO:0007669"/>
    <property type="project" value="TreeGrafter"/>
</dbReference>
<dbReference type="GO" id="GO:0004399">
    <property type="term" value="F:histidinol dehydrogenase activity"/>
    <property type="evidence" value="ECO:0007669"/>
    <property type="project" value="UniProtKB-UniRule"/>
</dbReference>
<dbReference type="GO" id="GO:0051287">
    <property type="term" value="F:NAD binding"/>
    <property type="evidence" value="ECO:0007669"/>
    <property type="project" value="InterPro"/>
</dbReference>
<dbReference type="GO" id="GO:0008270">
    <property type="term" value="F:zinc ion binding"/>
    <property type="evidence" value="ECO:0007669"/>
    <property type="project" value="UniProtKB-UniRule"/>
</dbReference>
<dbReference type="GO" id="GO:0000105">
    <property type="term" value="P:L-histidine biosynthetic process"/>
    <property type="evidence" value="ECO:0007669"/>
    <property type="project" value="UniProtKB-UniRule"/>
</dbReference>
<dbReference type="CDD" id="cd06572">
    <property type="entry name" value="Histidinol_dh"/>
    <property type="match status" value="1"/>
</dbReference>
<dbReference type="FunFam" id="1.20.5.1300:FF:000001">
    <property type="entry name" value="Histidine biosynthesis trifunctional protein"/>
    <property type="match status" value="1"/>
</dbReference>
<dbReference type="FunFam" id="3.40.50.1980:FF:000001">
    <property type="entry name" value="Histidinol dehydrogenase"/>
    <property type="match status" value="1"/>
</dbReference>
<dbReference type="Gene3D" id="1.20.5.1300">
    <property type="match status" value="1"/>
</dbReference>
<dbReference type="Gene3D" id="3.40.50.1980">
    <property type="entry name" value="Nitrogenase molybdenum iron protein domain"/>
    <property type="match status" value="2"/>
</dbReference>
<dbReference type="HAMAP" id="MF_01024">
    <property type="entry name" value="HisD"/>
    <property type="match status" value="1"/>
</dbReference>
<dbReference type="InterPro" id="IPR016161">
    <property type="entry name" value="Ald_DH/histidinol_DH"/>
</dbReference>
<dbReference type="InterPro" id="IPR001692">
    <property type="entry name" value="Histidinol_DH_CS"/>
</dbReference>
<dbReference type="InterPro" id="IPR022695">
    <property type="entry name" value="Histidinol_DH_monofunct"/>
</dbReference>
<dbReference type="InterPro" id="IPR012131">
    <property type="entry name" value="Hstdl_DH"/>
</dbReference>
<dbReference type="NCBIfam" id="TIGR00069">
    <property type="entry name" value="hisD"/>
    <property type="match status" value="1"/>
</dbReference>
<dbReference type="PANTHER" id="PTHR21256:SF2">
    <property type="entry name" value="HISTIDINE BIOSYNTHESIS TRIFUNCTIONAL PROTEIN"/>
    <property type="match status" value="1"/>
</dbReference>
<dbReference type="PANTHER" id="PTHR21256">
    <property type="entry name" value="HISTIDINOL DEHYDROGENASE HDH"/>
    <property type="match status" value="1"/>
</dbReference>
<dbReference type="Pfam" id="PF00815">
    <property type="entry name" value="Histidinol_dh"/>
    <property type="match status" value="1"/>
</dbReference>
<dbReference type="PIRSF" id="PIRSF000099">
    <property type="entry name" value="Histidinol_dh"/>
    <property type="match status" value="1"/>
</dbReference>
<dbReference type="PRINTS" id="PR00083">
    <property type="entry name" value="HOLDHDRGNASE"/>
</dbReference>
<dbReference type="SUPFAM" id="SSF53720">
    <property type="entry name" value="ALDH-like"/>
    <property type="match status" value="1"/>
</dbReference>
<dbReference type="PROSITE" id="PS00611">
    <property type="entry name" value="HISOL_DEHYDROGENASE"/>
    <property type="match status" value="1"/>
</dbReference>
<evidence type="ECO:0000255" key="1">
    <source>
        <dbReference type="HAMAP-Rule" id="MF_01024"/>
    </source>
</evidence>
<gene>
    <name evidence="1" type="primary">hisD</name>
    <name type="ordered locus">SSON_2091</name>
</gene>
<sequence length="434" mass="46131">MSFNTIIDWNSCTAEQQRQLLMRPAISASESITRTVNDILDNVKARGDDALREYSAKFDKTTVNALKVSAEEIAAASERLSDELKQAMAVAVKNIETFHTAQKLPPVDVETQPGVRCQQVTRPVASVGLYIPGGSAPLFSTVLMLATPARIAGCKKVVLCSPPPIADEILYAAQLCGVKDVFNVGGAQAIAALAFGTESVPKVDKIFGPGNAFVTEAKRQVSQRLDGAAIDMPAGPSEVLVIADSGATPDFVASDLLSQAEHGPDSQVILLTPDADMAHQVAEAVERQLAELPRAETARQALNASRLIVTKDLAQCVEISNQYGPEHLIIQTRNARDLVDGITSAGSVFLGDWSPESAGDYASGTNHVLPTYGYTATCSSLGLADFQKRMTVQELSKEGFSALASTIETLAAAERLTAHKNAVTLRVNALKEQA</sequence>
<feature type="chain" id="PRO_0000135845" description="Histidinol dehydrogenase">
    <location>
        <begin position="1"/>
        <end position="434"/>
    </location>
</feature>
<feature type="active site" description="Proton acceptor" evidence="1">
    <location>
        <position position="326"/>
    </location>
</feature>
<feature type="active site" description="Proton acceptor" evidence="1">
    <location>
        <position position="327"/>
    </location>
</feature>
<feature type="binding site" evidence="1">
    <location>
        <position position="130"/>
    </location>
    <ligand>
        <name>NAD(+)</name>
        <dbReference type="ChEBI" id="CHEBI:57540"/>
    </ligand>
</feature>
<feature type="binding site" evidence="1">
    <location>
        <position position="188"/>
    </location>
    <ligand>
        <name>NAD(+)</name>
        <dbReference type="ChEBI" id="CHEBI:57540"/>
    </ligand>
</feature>
<feature type="binding site" evidence="1">
    <location>
        <position position="211"/>
    </location>
    <ligand>
        <name>NAD(+)</name>
        <dbReference type="ChEBI" id="CHEBI:57540"/>
    </ligand>
</feature>
<feature type="binding site" evidence="1">
    <location>
        <position position="237"/>
    </location>
    <ligand>
        <name>substrate</name>
    </ligand>
</feature>
<feature type="binding site" evidence="1">
    <location>
        <position position="259"/>
    </location>
    <ligand>
        <name>substrate</name>
    </ligand>
</feature>
<feature type="binding site" evidence="1">
    <location>
        <position position="259"/>
    </location>
    <ligand>
        <name>Zn(2+)</name>
        <dbReference type="ChEBI" id="CHEBI:29105"/>
    </ligand>
</feature>
<feature type="binding site" evidence="1">
    <location>
        <position position="262"/>
    </location>
    <ligand>
        <name>substrate</name>
    </ligand>
</feature>
<feature type="binding site" evidence="1">
    <location>
        <position position="262"/>
    </location>
    <ligand>
        <name>Zn(2+)</name>
        <dbReference type="ChEBI" id="CHEBI:29105"/>
    </ligand>
</feature>
<feature type="binding site" evidence="1">
    <location>
        <position position="327"/>
    </location>
    <ligand>
        <name>substrate</name>
    </ligand>
</feature>
<feature type="binding site" evidence="1">
    <location>
        <position position="360"/>
    </location>
    <ligand>
        <name>substrate</name>
    </ligand>
</feature>
<feature type="binding site" evidence="1">
    <location>
        <position position="360"/>
    </location>
    <ligand>
        <name>Zn(2+)</name>
        <dbReference type="ChEBI" id="CHEBI:29105"/>
    </ligand>
</feature>
<feature type="binding site" evidence="1">
    <location>
        <position position="414"/>
    </location>
    <ligand>
        <name>substrate</name>
    </ligand>
</feature>
<feature type="binding site" evidence="1">
    <location>
        <position position="419"/>
    </location>
    <ligand>
        <name>substrate</name>
    </ligand>
</feature>
<feature type="binding site" evidence="1">
    <location>
        <position position="419"/>
    </location>
    <ligand>
        <name>Zn(2+)</name>
        <dbReference type="ChEBI" id="CHEBI:29105"/>
    </ligand>
</feature>
<accession>Q3Z0G5</accession>
<name>HISX_SHISS</name>
<protein>
    <recommendedName>
        <fullName evidence="1">Histidinol dehydrogenase</fullName>
        <shortName evidence="1">HDH</shortName>
        <ecNumber evidence="1">1.1.1.23</ecNumber>
    </recommendedName>
</protein>